<dbReference type="EC" id="3.4.21.97" evidence="4"/>
<dbReference type="EMBL" id="AY961628">
    <property type="protein sequence ID" value="AAY41150.1"/>
    <property type="molecule type" value="Genomic_DNA"/>
</dbReference>
<dbReference type="SMR" id="Q3KSP9"/>
<dbReference type="MEROPS" id="S21.003"/>
<dbReference type="Proteomes" id="UP000007641">
    <property type="component" value="Genome"/>
</dbReference>
<dbReference type="GO" id="GO:0030430">
    <property type="term" value="C:host cell cytoplasm"/>
    <property type="evidence" value="ECO:0007669"/>
    <property type="project" value="UniProtKB-SubCell"/>
</dbReference>
<dbReference type="GO" id="GO:0042025">
    <property type="term" value="C:host cell nucleus"/>
    <property type="evidence" value="ECO:0007669"/>
    <property type="project" value="UniProtKB-SubCell"/>
</dbReference>
<dbReference type="GO" id="GO:0042802">
    <property type="term" value="F:identical protein binding"/>
    <property type="evidence" value="ECO:0007669"/>
    <property type="project" value="UniProtKB-UniRule"/>
</dbReference>
<dbReference type="GO" id="GO:0004252">
    <property type="term" value="F:serine-type endopeptidase activity"/>
    <property type="evidence" value="ECO:0007669"/>
    <property type="project" value="UniProtKB-UniRule"/>
</dbReference>
<dbReference type="GO" id="GO:0039708">
    <property type="term" value="P:nuclear capsid assembly"/>
    <property type="evidence" value="ECO:0007669"/>
    <property type="project" value="UniProtKB-ARBA"/>
</dbReference>
<dbReference type="GO" id="GO:0006508">
    <property type="term" value="P:proteolysis"/>
    <property type="evidence" value="ECO:0007669"/>
    <property type="project" value="UniProtKB-KW"/>
</dbReference>
<dbReference type="GO" id="GO:0019076">
    <property type="term" value="P:viral release from host cell"/>
    <property type="evidence" value="ECO:0007669"/>
    <property type="project" value="UniProtKB-UniRule"/>
</dbReference>
<dbReference type="Gene3D" id="3.20.16.10">
    <property type="entry name" value="Herpesvirus/Caudovirus protease domain"/>
    <property type="match status" value="1"/>
</dbReference>
<dbReference type="HAMAP" id="MF_04008">
    <property type="entry name" value="HSV_SCAF"/>
    <property type="match status" value="1"/>
</dbReference>
<dbReference type="InterPro" id="IPR035443">
    <property type="entry name" value="Herpes_virus_sf"/>
</dbReference>
<dbReference type="InterPro" id="IPR001847">
    <property type="entry name" value="Peptidase_S21"/>
</dbReference>
<dbReference type="Pfam" id="PF00716">
    <property type="entry name" value="Peptidase_S21"/>
    <property type="match status" value="1"/>
</dbReference>
<dbReference type="PRINTS" id="PR00236">
    <property type="entry name" value="HSVCAPSIDP40"/>
</dbReference>
<dbReference type="SUPFAM" id="SSF50789">
    <property type="entry name" value="Herpes virus serine proteinase, assemblin"/>
    <property type="match status" value="1"/>
</dbReference>
<gene>
    <name evidence="2" type="ORF">BVRF2/BdRF1</name>
</gene>
<evidence type="ECO:0000250" key="1"/>
<evidence type="ECO:0000250" key="2">
    <source>
        <dbReference type="UniProtKB" id="P03234"/>
    </source>
</evidence>
<evidence type="ECO:0000250" key="3">
    <source>
        <dbReference type="UniProtKB" id="P16753"/>
    </source>
</evidence>
<evidence type="ECO:0000255" key="4">
    <source>
        <dbReference type="HAMAP-Rule" id="MF_04008"/>
    </source>
</evidence>
<evidence type="ECO:0000256" key="5">
    <source>
        <dbReference type="SAM" id="MobiDB-lite"/>
    </source>
</evidence>
<evidence type="ECO:0000305" key="6"/>
<accession>Q3KSP9</accession>
<name>SCAF_EBVG</name>
<reference key="1">
    <citation type="journal article" date="2005" name="J. Virol.">
        <title>Genomic sequence analysis of Epstein-Barr virus strain GD1 from a nasopharyngeal carcinoma patient.</title>
        <authorList>
            <person name="Zeng M.-S."/>
            <person name="Li D.-J."/>
            <person name="Liu Q.-L."/>
            <person name="Song L.-B."/>
            <person name="Li M.-Z."/>
            <person name="Zhang R.-H."/>
            <person name="Yu X.-J."/>
            <person name="Wang H.-M."/>
            <person name="Ernberg I."/>
            <person name="Zeng Y.-X."/>
        </authorList>
    </citation>
    <scope>NUCLEOTIDE SEQUENCE [LARGE SCALE GENOMIC DNA]</scope>
</reference>
<organismHost>
    <name type="scientific">Homo sapiens</name>
    <name type="common">Human</name>
    <dbReference type="NCBI Taxonomy" id="9606"/>
</organismHost>
<organism>
    <name type="scientific">Epstein-Barr virus (strain GD1)</name>
    <name type="common">HHV-4</name>
    <name type="synonym">Human gammaherpesvirus 4</name>
    <dbReference type="NCBI Taxonomy" id="10376"/>
    <lineage>
        <taxon>Viruses</taxon>
        <taxon>Duplodnaviria</taxon>
        <taxon>Heunggongvirae</taxon>
        <taxon>Peploviricota</taxon>
        <taxon>Herviviricetes</taxon>
        <taxon>Herpesvirales</taxon>
        <taxon>Orthoherpesviridae</taxon>
        <taxon>Gammaherpesvirinae</taxon>
        <taxon>Lymphocryptovirus</taxon>
        <taxon>Lymphocryptovirus humangamma4</taxon>
    </lineage>
</organism>
<keyword id="KW-0877">Alternative promoter usage</keyword>
<keyword id="KW-1035">Host cytoplasm</keyword>
<keyword id="KW-1048">Host nucleus</keyword>
<keyword id="KW-0378">Hydrolase</keyword>
<keyword id="KW-0597">Phosphoprotein</keyword>
<keyword id="KW-0645">Protease</keyword>
<keyword id="KW-0720">Serine protease</keyword>
<keyword id="KW-0118">Viral capsid assembly</keyword>
<keyword id="KW-1188">Viral release from host cell</keyword>
<feature type="chain" id="PRO_0000379892" description="Capsid scaffolding protein">
    <location>
        <begin position="1"/>
        <end position="605"/>
    </location>
</feature>
<feature type="chain" id="PRO_0000379893" description="Assemblin" evidence="4">
    <location>
        <begin position="1"/>
        <end position="235"/>
    </location>
</feature>
<feature type="chain" id="PRO_0000379894" description="Assembly protein" evidence="4">
    <location>
        <begin position="236"/>
        <end position="605"/>
    </location>
</feature>
<feature type="region of interest" description="Disordered" evidence="5">
    <location>
        <begin position="235"/>
        <end position="274"/>
    </location>
</feature>
<feature type="region of interest" description="Interaction with pAP" evidence="4">
    <location>
        <begin position="281"/>
        <end position="300"/>
    </location>
</feature>
<feature type="region of interest" description="Disordered" evidence="5">
    <location>
        <begin position="403"/>
        <end position="431"/>
    </location>
</feature>
<feature type="region of interest" description="Disordered" evidence="5">
    <location>
        <begin position="489"/>
        <end position="588"/>
    </location>
</feature>
<feature type="region of interest" description="Interaction with major capsid protein" evidence="4">
    <location>
        <begin position="585"/>
        <end position="605"/>
    </location>
</feature>
<feature type="short sequence motif" description="Nuclear localization signal" evidence="1">
    <location>
        <begin position="410"/>
        <end position="416"/>
    </location>
</feature>
<feature type="compositionally biased region" description="Polar residues" evidence="5">
    <location>
        <begin position="568"/>
        <end position="579"/>
    </location>
</feature>
<feature type="active site" description="Charge relay system" evidence="4">
    <location>
        <position position="48"/>
    </location>
</feature>
<feature type="active site" description="Charge relay system" evidence="4">
    <location>
        <position position="116"/>
    </location>
</feature>
<feature type="active site" description="Charge relay system" evidence="4">
    <location>
        <position position="139"/>
    </location>
</feature>
<feature type="site" description="Cleavage; by assemblin; Release site" evidence="4">
    <location>
        <begin position="235"/>
        <end position="236"/>
    </location>
</feature>
<feature type="site" description="Cleavage; by assemblin; Maturation site" evidence="3">
    <location>
        <begin position="568"/>
        <end position="569"/>
    </location>
</feature>
<feature type="splice variant" id="VSP_037730" description="In isoform pAP." evidence="6">
    <location>
        <begin position="1"/>
        <end position="260"/>
    </location>
</feature>
<proteinExistence type="inferred from homology"/>
<sequence>MVQAPSVYVCGFVERPDAPPKDACLHLDPLTVKSQLPLKKPLPLTVEHLPDAPVGSVFGLYQSRAGLFSAASITSGDFLSLLDSIYHDCDIAQSQRLPLPREPKVEALHAWLPSLSLASLHPDIPQTTADGGKLSFFDHVSICALGRRRGTTAVYGTDLAWVLKHFSDLEPSIAAQIENDANAAKRESGCPEDHPLPLTKLIAKAIDAGFLRNRVETLRQDRGVANIPAESYLKASDAPDLQKPDKALQSPPPASTDPATMLSGNAGEGATACGGSAAAGQDLISVPRNTFMTLLQTNLDNKPPRQTPLPYAAPLPPFSHQAIATAPSYGPGAGAVSPAGGYFTSPGGYYAGPAGGDPGAFLAMDAHTYHPHPHPPPAYFGLPGLFGPPPPVPPYYGSHLRADYVPAPSRSNKRKRDPEEDEEGGGLFPGEDATLYRKDIAGLSKSVNELQHTLQALRRETLSYGHTGVGYCPQQGPCYTHSGPYGFQPHQSYEVPRYVPHPPPPPTSHQAAQAQPPPPGTQAPEAHCVAESTIPEAGAAGNSGPREDTNPQQPTTEGHHRGKKLVQASASGVAQSKEPTTPKAKSVSAHLKSIFCEELLNKRVA</sequence>
<protein>
    <recommendedName>
        <fullName evidence="4">Capsid scaffolding protein</fullName>
    </recommendedName>
    <alternativeName>
        <fullName>Capsid protein P40</fullName>
    </alternativeName>
    <alternativeName>
        <fullName evidence="4">Protease precursor</fullName>
        <shortName evidence="4">pPR</shortName>
    </alternativeName>
    <alternativeName>
        <fullName>Protein EC-RF3/EC-RF3A</fullName>
    </alternativeName>
    <alternativeName>
        <fullName>Virion structural protein BVRF2</fullName>
    </alternativeName>
    <component>
        <recommendedName>
            <fullName evidence="4">Assemblin</fullName>
            <ecNumber evidence="4">3.4.21.97</ecNumber>
        </recommendedName>
        <alternativeName>
            <fullName>Capsid protein VP24</fullName>
        </alternativeName>
        <alternativeName>
            <fullName evidence="4">Protease</fullName>
            <shortName evidence="4">Pr</shortName>
        </alternativeName>
    </component>
    <component>
        <recommendedName>
            <fullName evidence="4">Assembly protein</fullName>
            <shortName evidence="4">AP</shortName>
        </recommendedName>
        <alternativeName>
            <fullName evidence="4">Capsid assembly protein</fullName>
        </alternativeName>
        <alternativeName>
            <fullName>Capsid protein VP22A</fullName>
        </alternativeName>
    </component>
</protein>
<comment type="function">
    <molecule>Capsid scaffolding protein</molecule>
    <text evidence="4">Acts as a scaffold protein by binding major capsid protein in the cytoplasm, inducing the nuclear localization of both proteins. Multimerizes in the nucleus such as major capsid protein forms the icosahedral T=16 capsid. Autocatalytic cleavage releases the assembly protein, and subsequently abolishes interaction with major capsid protein. Cleavages products are evicted from the capsid before or during DNA packaging.</text>
</comment>
<comment type="function">
    <molecule>Assemblin</molecule>
    <text evidence="4">Protease that plays an essential role in virion assembly within the nucleus. Catalyzes the cleavage of the assembly protein after formation of the spherical procapsid. By that cleavage, the capsid matures and gains its icosahedral shape. The cleavage sites seem to include -Ala-Ser-, -Ala-Ala-, as well as Ala-Thr bonds. Assemblin and cleavages products are evicted from the capsid before or during DNA packaging.</text>
</comment>
<comment type="function">
    <molecule>Assembly protein</molecule>
    <text evidence="4">Plays a major role in capsid assembly. Acts as a scaffold protein by binding major capsid protein. Multimerizes in the nucleus such as major capsid protein forms the icosahedral T=16 capsid. Cleaved by assemblin after capsid completion. The cleavages products are evicted from the capsid before or during DNA packaging.</text>
</comment>
<comment type="catalytic activity">
    <molecule>Assemblin</molecule>
    <reaction evidence="4">
        <text>Cleaves -Ala-|-Ser- and -Ala-|-Ala- bonds in the scaffold protein.</text>
        <dbReference type="EC" id="3.4.21.97"/>
    </reaction>
</comment>
<comment type="subunit">
    <molecule>Capsid scaffolding protein</molecule>
    <text evidence="4">Homomultimer. Interacts with major capsid protein.</text>
</comment>
<comment type="subunit">
    <molecule>Assemblin</molecule>
    <text evidence="4">Exists in a monomer-dimer equilibrium with the dimer being the active species.</text>
</comment>
<comment type="subunit">
    <molecule>Assembly protein</molecule>
    <text evidence="4">Homomultimer. Interacts with major capsid protein.</text>
</comment>
<comment type="subcellular location">
    <molecule>Capsid scaffolding protein</molecule>
    <subcellularLocation>
        <location evidence="4">Host cytoplasm</location>
    </subcellularLocation>
</comment>
<comment type="subcellular location">
    <molecule>Assemblin</molecule>
    <subcellularLocation>
        <location evidence="4">Host nucleus</location>
    </subcellularLocation>
</comment>
<comment type="subcellular location">
    <molecule>Assembly protein</molecule>
    <subcellularLocation>
        <location evidence="4">Host nucleus</location>
    </subcellularLocation>
</comment>
<comment type="subcellular location">
    <molecule>Isoform pAP</molecule>
    <subcellularLocation>
        <location evidence="2">Host nucleus</location>
    </subcellularLocation>
</comment>
<comment type="alternative products">
    <event type="alternative promoter"/>
    <isoform>
        <id>Q3KSP9-1</id>
        <name>Capsid scaffolding protein</name>
        <name>pPR</name>
        <name>EC-RF3</name>
        <sequence type="displayed"/>
    </isoform>
    <isoform>
        <id>Q3KSP9-2</id>
        <name>pAP</name>
        <name>Assembly protein</name>
        <name>EC-RF3A</name>
        <sequence type="described" ref="VSP_037730"/>
    </isoform>
</comment>
<comment type="domain">
    <text evidence="4">Region of interaction between pPR and pAP is called Amino conserved domain (ACD). The region of interaction with major capsid protein is called carboxyl conserved domain (CCD).</text>
</comment>
<comment type="PTM">
    <molecule>Capsid scaffolding protein</molecule>
    <text evidence="4">Capsid scaffolding protein is cleaved by assemblin after formation of the spherical procapsid. As a result, the capsid obtains its mature, icosahedral shape. Cleavages occur at two or more sites: release (R-site) and maturation (M-site).</text>
</comment>
<comment type="similarity">
    <text evidence="4">Belongs to the herpesviridae capsid scaffolding protein family.</text>
</comment>
<comment type="caution">
    <text evidence="6">Be careful of the possible confusion between BDRF1 with BdRF1.</text>
</comment>